<organism>
    <name type="scientific">Gallus gallus</name>
    <name type="common">Chicken</name>
    <dbReference type="NCBI Taxonomy" id="9031"/>
    <lineage>
        <taxon>Eukaryota</taxon>
        <taxon>Metazoa</taxon>
        <taxon>Chordata</taxon>
        <taxon>Craniata</taxon>
        <taxon>Vertebrata</taxon>
        <taxon>Euteleostomi</taxon>
        <taxon>Archelosauria</taxon>
        <taxon>Archosauria</taxon>
        <taxon>Dinosauria</taxon>
        <taxon>Saurischia</taxon>
        <taxon>Theropoda</taxon>
        <taxon>Coelurosauria</taxon>
        <taxon>Aves</taxon>
        <taxon>Neognathae</taxon>
        <taxon>Galloanserae</taxon>
        <taxon>Galliformes</taxon>
        <taxon>Phasianidae</taxon>
        <taxon>Phasianinae</taxon>
        <taxon>Gallus</taxon>
    </lineage>
</organism>
<dbReference type="EC" id="3.1.3.48" evidence="2"/>
<dbReference type="EMBL" id="AJ008003">
    <property type="protein sequence ID" value="CAA07823.1"/>
    <property type="molecule type" value="mRNA"/>
</dbReference>
<dbReference type="SMR" id="Q9YH99"/>
<dbReference type="FunCoup" id="Q9YH99">
    <property type="interactions" value="1890"/>
</dbReference>
<dbReference type="STRING" id="9031.ENSGALP00000001125"/>
<dbReference type="PaxDb" id="9031-ENSGALP00000001125"/>
<dbReference type="VEuPathDB" id="HostDB:geneid_395717"/>
<dbReference type="eggNOG" id="KOG3107">
    <property type="taxonomic scope" value="Eukaryota"/>
</dbReference>
<dbReference type="HOGENOM" id="CLU_021184_2_1_1"/>
<dbReference type="InParanoid" id="Q9YH99"/>
<dbReference type="OrthoDB" id="167668at2759"/>
<dbReference type="PhylomeDB" id="Q9YH99"/>
<dbReference type="Proteomes" id="UP000000539">
    <property type="component" value="Unassembled WGS sequence"/>
</dbReference>
<dbReference type="GO" id="GO:0005737">
    <property type="term" value="C:cytoplasm"/>
    <property type="evidence" value="ECO:0007669"/>
    <property type="project" value="UniProtKB-SubCell"/>
</dbReference>
<dbReference type="GO" id="GO:0005634">
    <property type="term" value="C:nucleus"/>
    <property type="evidence" value="ECO:0000250"/>
    <property type="project" value="UniProtKB"/>
</dbReference>
<dbReference type="GO" id="GO:0140793">
    <property type="term" value="F:histone H2AXY142 phosphatase activity"/>
    <property type="evidence" value="ECO:0000250"/>
    <property type="project" value="UniProtKB"/>
</dbReference>
<dbReference type="GO" id="GO:0046872">
    <property type="term" value="F:metal ion binding"/>
    <property type="evidence" value="ECO:0007669"/>
    <property type="project" value="UniProtKB-KW"/>
</dbReference>
<dbReference type="GO" id="GO:0004725">
    <property type="term" value="F:protein tyrosine phosphatase activity"/>
    <property type="evidence" value="ECO:0000250"/>
    <property type="project" value="UniProtKB"/>
</dbReference>
<dbReference type="GO" id="GO:0030154">
    <property type="term" value="P:cell differentiation"/>
    <property type="evidence" value="ECO:0000318"/>
    <property type="project" value="GO_Central"/>
</dbReference>
<dbReference type="GO" id="GO:0006302">
    <property type="term" value="P:double-strand break repair"/>
    <property type="evidence" value="ECO:0000250"/>
    <property type="project" value="UniProtKB"/>
</dbReference>
<dbReference type="GO" id="GO:2001240">
    <property type="term" value="P:negative regulation of extrinsic apoptotic signaling pathway in absence of ligand"/>
    <property type="evidence" value="ECO:0000318"/>
    <property type="project" value="GO_Central"/>
</dbReference>
<dbReference type="GO" id="GO:0045739">
    <property type="term" value="P:positive regulation of DNA repair"/>
    <property type="evidence" value="ECO:0000250"/>
    <property type="project" value="UniProtKB"/>
</dbReference>
<dbReference type="GO" id="GO:0010212">
    <property type="term" value="P:response to ionizing radiation"/>
    <property type="evidence" value="ECO:0000250"/>
    <property type="project" value="UniProtKB"/>
</dbReference>
<dbReference type="Gene3D" id="3.40.50.12350">
    <property type="match status" value="1"/>
</dbReference>
<dbReference type="InterPro" id="IPR028472">
    <property type="entry name" value="EYA"/>
</dbReference>
<dbReference type="InterPro" id="IPR038102">
    <property type="entry name" value="EYA_dom_sf"/>
</dbReference>
<dbReference type="PANTHER" id="PTHR10190">
    <property type="entry name" value="EYES ABSENT"/>
    <property type="match status" value="1"/>
</dbReference>
<dbReference type="PANTHER" id="PTHR10190:SF5">
    <property type="entry name" value="EYES ABSENT HOMOLOG 3"/>
    <property type="match status" value="1"/>
</dbReference>
<accession>Q9YH99</accession>
<keyword id="KW-0010">Activator</keyword>
<keyword id="KW-0156">Chromatin regulator</keyword>
<keyword id="KW-0963">Cytoplasm</keyword>
<keyword id="KW-0217">Developmental protein</keyword>
<keyword id="KW-0227">DNA damage</keyword>
<keyword id="KW-0234">DNA repair</keyword>
<keyword id="KW-0378">Hydrolase</keyword>
<keyword id="KW-0460">Magnesium</keyword>
<keyword id="KW-0479">Metal-binding</keyword>
<keyword id="KW-0539">Nucleus</keyword>
<keyword id="KW-0904">Protein phosphatase</keyword>
<keyword id="KW-1185">Reference proteome</keyword>
<keyword id="KW-0804">Transcription</keyword>
<keyword id="KW-0805">Transcription regulation</keyword>
<protein>
    <recommendedName>
        <fullName evidence="4">Protein phosphatase EYA3</fullName>
        <ecNumber evidence="2">3.1.3.48</ecNumber>
    </recommendedName>
    <alternativeName>
        <fullName>Eyes absent homolog 3</fullName>
    </alternativeName>
</protein>
<sequence length="119" mass="13704">RKLAFRYRRVREIYDKYKTNVGGLLSPQKREALQRLRTDIEVLTDSWLETALKSLLLIQSRKNCVNILITTTQLVPALAKVLLYGLGEVFPIENIYSATKIGKESCFERIVSRFGKKVT</sequence>
<comment type="function">
    <text evidence="2 3">Tyrosine phosphatase that specifically dephosphorylates 'Tyr-142' of histone H2AX (H2AXY142ph). 'Tyr-142' phosphorylation of histone H2AX plays a central role in DNA repair and acts as a mark that distinguishes between apoptotic and repair responses to genotoxic stress. Promotes efficient DNA repair by dephosphorylating H2AX, promoting the recruitment of DNA repair complexes containing MDC1 (By similarity). Its function as histone phosphatase probably explains its role in transcription regulation during organogenesis. May be involved in development of the eye (By similarity).</text>
</comment>
<comment type="catalytic activity">
    <reaction evidence="2">
        <text>O-phospho-L-tyrosyl-[protein] + H2O = L-tyrosyl-[protein] + phosphate</text>
        <dbReference type="Rhea" id="RHEA:10684"/>
        <dbReference type="Rhea" id="RHEA-COMP:10136"/>
        <dbReference type="Rhea" id="RHEA-COMP:20101"/>
        <dbReference type="ChEBI" id="CHEBI:15377"/>
        <dbReference type="ChEBI" id="CHEBI:43474"/>
        <dbReference type="ChEBI" id="CHEBI:46858"/>
        <dbReference type="ChEBI" id="CHEBI:61978"/>
        <dbReference type="EC" id="3.1.3.48"/>
    </reaction>
</comment>
<comment type="cofactor">
    <cofactor evidence="1">
        <name>Mg(2+)</name>
        <dbReference type="ChEBI" id="CHEBI:18420"/>
    </cofactor>
    <text evidence="1">Binds 1 Mg(2+) ion per subunit.</text>
</comment>
<comment type="subcellular location">
    <subcellularLocation>
        <location evidence="2">Cytoplasm</location>
    </subcellularLocation>
    <subcellularLocation>
        <location evidence="2">Nucleus</location>
    </subcellularLocation>
</comment>
<comment type="similarity">
    <text evidence="4">Belongs to the HAD-like hydrolase superfamily. EYA family.</text>
</comment>
<feature type="chain" id="PRO_0000218650" description="Protein phosphatase EYA3">
    <location>
        <begin position="1" status="less than"/>
        <end position="119" status="greater than"/>
    </location>
</feature>
<feature type="non-terminal residue">
    <location>
        <position position="1"/>
    </location>
</feature>
<feature type="non-terminal residue">
    <location>
        <position position="119"/>
    </location>
</feature>
<reference key="1">
    <citation type="journal article" date="1999" name="Hum. Mol. Genet.">
        <title>EYA4, a novel vertebrate gene related to Drosophila eyes absent.</title>
        <authorList>
            <person name="Borsani G."/>
            <person name="DeGrandi A."/>
            <person name="Ballabio A."/>
            <person name="Bulfone A."/>
            <person name="Bernard L."/>
            <person name="Banfi S."/>
            <person name="Gattuso C."/>
            <person name="Mariani M."/>
            <person name="Dixon M."/>
            <person name="Donnai D."/>
            <person name="Metcalfe K."/>
            <person name="Winter R."/>
            <person name="Robertson M."/>
            <person name="Axton R."/>
            <person name="Brown A."/>
            <person name="van Heyningen V."/>
            <person name="Hanson I."/>
        </authorList>
    </citation>
    <scope>NUCLEOTIDE SEQUENCE [MRNA]</scope>
    <source>
        <tissue>Embryo</tissue>
    </source>
</reference>
<proteinExistence type="evidence at transcript level"/>
<evidence type="ECO:0000250" key="1">
    <source>
        <dbReference type="UniProtKB" id="O00167"/>
    </source>
</evidence>
<evidence type="ECO:0000250" key="2">
    <source>
        <dbReference type="UniProtKB" id="P97480"/>
    </source>
</evidence>
<evidence type="ECO:0000250" key="3">
    <source>
        <dbReference type="UniProtKB" id="Q99504"/>
    </source>
</evidence>
<evidence type="ECO:0000305" key="4"/>
<gene>
    <name type="primary">EYA3</name>
</gene>
<name>EYA3_CHICK</name>